<accession>Q09353</accession>
<accession>Q8IU18</accession>
<comment type="function">
    <text evidence="4 5">Protease that deconjugates smo-1 from targeted proteins and may catalyze the processing of smo-1 to its mature form.</text>
</comment>
<comment type="subcellular location">
    <subcellularLocation>
        <location evidence="5">Nucleus envelope</location>
    </subcellularLocation>
</comment>
<comment type="disruption phenotype">
    <text evidence="5">RNAi-mediated knockdown causes increased presence of smo-1 conjugates during the first embryonic mitotic division.</text>
</comment>
<comment type="similarity">
    <text evidence="6">Belongs to the peptidase C48 family.</text>
</comment>
<keyword id="KW-0378">Hydrolase</keyword>
<keyword id="KW-0539">Nucleus</keyword>
<keyword id="KW-0645">Protease</keyword>
<keyword id="KW-1185">Reference proteome</keyword>
<keyword id="KW-0788">Thiol protease</keyword>
<feature type="chain" id="PRO_0000101730" description="Sentrin-specific protease">
    <location>
        <begin position="1"/>
        <end position="697"/>
    </location>
</feature>
<feature type="region of interest" description="Disordered" evidence="3">
    <location>
        <begin position="1"/>
        <end position="47"/>
    </location>
</feature>
<feature type="region of interest" description="Disordered" evidence="3">
    <location>
        <begin position="365"/>
        <end position="387"/>
    </location>
</feature>
<feature type="region of interest" description="Protease">
    <location>
        <begin position="501"/>
        <end position="664"/>
    </location>
</feature>
<feature type="short sequence motif" description="Nuclear localization signal" evidence="2">
    <location>
        <begin position="15"/>
        <end position="19"/>
    </location>
</feature>
<feature type="short sequence motif" description="Nuclear localization signal" evidence="2">
    <location>
        <begin position="462"/>
        <end position="467"/>
    </location>
</feature>
<feature type="compositionally biased region" description="Basic and acidic residues" evidence="3">
    <location>
        <begin position="1"/>
        <end position="14"/>
    </location>
</feature>
<feature type="active site" evidence="1">
    <location>
        <position position="585"/>
    </location>
</feature>
<feature type="active site" evidence="1">
    <location>
        <position position="602"/>
    </location>
</feature>
<feature type="active site" evidence="1">
    <location>
        <position position="653"/>
    </location>
</feature>
<protein>
    <recommendedName>
        <fullName>Sentrin-specific protease</fullName>
        <ecNumber>3.4.22.-</ecNumber>
    </recommendedName>
    <alternativeName>
        <fullName>SUMO protease</fullName>
        <shortName>SuPr</shortName>
    </alternativeName>
    <alternativeName>
        <fullName>Ubiquitin-like protease</fullName>
    </alternativeName>
</protein>
<sequence>MSRRSDLSDKDSQSRKRHWLTDQAVTNEEKEQSPTKRTRKTKSQGLGGLFNTFFGMFVSSNSGEKEKTEVSGEVQVQEDDEIIVEGTTRRVAENKKYMIFLNEDAPVRANAGSEENEVIIEKHVQKNVEIRNDEEKQEVQGDLVLTLSSSPKSPKNLEKSFEVQQDDEEPDVLFEKVVKTPNKQLQEARRFQNELIFLNDNPDTPDDVSVISDSRSKEFISPTPDDSVSRPITPSLSSLSNYTSNNVRDYWRRNSAKKPEVLRRVPVRHQFKHSTSVRKMNTIIDLKKIKNHLSSRDRLLQGVVASGQYEAKAISGIVEKKPKKMQRTSSTDILARAKNKIAELGGSRSNTPSLLSREPSIIIDSEESTSSSYRQHARSNSSESDSYRKLNDILSQINSLGIGSAYRGPQRYQNSYQLSKQKEDKLLEEARIREGHRSQTRGDRLEDVRKRLELQGIAIRPKVEKKKVDDFMALPDAADALVERAWSGGNPNEQFVDAFSIQICKKDLATLSGLHWLNDEIINFYLQLICDRSNGDSKYPKIYAFNTFFYSNIVSKGYASVKRWTRKVDIFAFDIVLVPVHLGMHWCMAVIDMGEKKIEFYDSLYDGNTAVLPALRGYLEAESLDKKKTAMNFSGWTIQQMTDIPRQQNGSDCGVFSCQFGEWASRRTTPRFTQKNMPYYRKRMVYEIVSKKLLATI</sequence>
<name>SENP_CAEEL</name>
<evidence type="ECO:0000250" key="1"/>
<evidence type="ECO:0000255" key="2"/>
<evidence type="ECO:0000256" key="3">
    <source>
        <dbReference type="SAM" id="MobiDB-lite"/>
    </source>
</evidence>
<evidence type="ECO:0000269" key="4">
    <source>
    </source>
</evidence>
<evidence type="ECO:0000269" key="5">
    <source>
    </source>
</evidence>
<evidence type="ECO:0000305" key="6"/>
<reference key="1">
    <citation type="submission" date="2002-10" db="EMBL/GenBank/DDBJ databases">
        <authorList>
            <person name="Tsubaki A."/>
            <person name="Inoue H."/>
            <person name="Takahashi K."/>
        </authorList>
    </citation>
    <scope>NUCLEOTIDE SEQUENCE [MRNA]</scope>
    <source>
        <strain>Bristol N2</strain>
    </source>
</reference>
<reference key="2">
    <citation type="journal article" date="1998" name="Science">
        <title>Genome sequence of the nematode C. elegans: a platform for investigating biology.</title>
        <authorList>
            <consortium name="The C. elegans sequencing consortium"/>
        </authorList>
    </citation>
    <scope>NUCLEOTIDE SEQUENCE [LARGE SCALE GENOMIC DNA]</scope>
    <source>
        <strain>Bristol N2</strain>
    </source>
</reference>
<reference key="3">
    <citation type="journal article" date="2004" name="Nat. Genet.">
        <title>SUMO modification is required for in vivo Hox gene regulation by the Caenorhabditis elegans Polycomb group protein SOP-2.</title>
        <authorList>
            <person name="Zhang H."/>
            <person name="Smolen G.A."/>
            <person name="Palmer R."/>
            <person name="Christoforou A."/>
            <person name="van den Heuvel S."/>
            <person name="Haber D.A."/>
        </authorList>
    </citation>
    <scope>FUNCTION</scope>
</reference>
<reference key="4">
    <citation type="journal article" date="2014" name="Nat. Commun.">
        <title>Dynamic SUMO modification regulates mitotic chromosome assembly and cell cycle progression in Caenorhabditis elegans.</title>
        <authorList>
            <person name="Pelisch F."/>
            <person name="Sonneville R."/>
            <person name="Pourkarimi E."/>
            <person name="Agostinho A."/>
            <person name="Blow J.J."/>
            <person name="Gartner A."/>
            <person name="Hay R.T."/>
        </authorList>
    </citation>
    <scope>FUNCTION</scope>
    <scope>SUBCELLULAR LOCATION</scope>
    <scope>DISRUPTION PHENOTYPE</scope>
</reference>
<proteinExistence type="evidence at transcript level"/>
<organism>
    <name type="scientific">Caenorhabditis elegans</name>
    <dbReference type="NCBI Taxonomy" id="6239"/>
    <lineage>
        <taxon>Eukaryota</taxon>
        <taxon>Metazoa</taxon>
        <taxon>Ecdysozoa</taxon>
        <taxon>Nematoda</taxon>
        <taxon>Chromadorea</taxon>
        <taxon>Rhabditida</taxon>
        <taxon>Rhabditina</taxon>
        <taxon>Rhabditomorpha</taxon>
        <taxon>Rhabditoidea</taxon>
        <taxon>Rhabditidae</taxon>
        <taxon>Peloderinae</taxon>
        <taxon>Caenorhabditis</taxon>
    </lineage>
</organism>
<gene>
    <name type="primary">ulp-1</name>
    <name type="ORF">T10F2.3</name>
</gene>
<dbReference type="EC" id="3.4.22.-"/>
<dbReference type="EMBL" id="AB095020">
    <property type="protein sequence ID" value="BAC22612.1"/>
    <property type="molecule type" value="mRNA"/>
</dbReference>
<dbReference type="EMBL" id="FO081619">
    <property type="protein sequence ID" value="CCD72868.1"/>
    <property type="molecule type" value="Genomic_DNA"/>
</dbReference>
<dbReference type="RefSeq" id="NP_498095.3">
    <property type="nucleotide sequence ID" value="NM_065694.6"/>
</dbReference>
<dbReference type="SMR" id="Q09353"/>
<dbReference type="BioGRID" id="40935">
    <property type="interactions" value="7"/>
</dbReference>
<dbReference type="FunCoup" id="Q09353">
    <property type="interactions" value="666"/>
</dbReference>
<dbReference type="STRING" id="6239.T10F2.3.1"/>
<dbReference type="MEROPS" id="C48.A15"/>
<dbReference type="iPTMnet" id="Q09353"/>
<dbReference type="PaxDb" id="6239-T10F2.3"/>
<dbReference type="PeptideAtlas" id="Q09353"/>
<dbReference type="EnsemblMetazoa" id="T10F2.3.1">
    <property type="protein sequence ID" value="T10F2.3.1"/>
    <property type="gene ID" value="WBGene00006736"/>
</dbReference>
<dbReference type="GeneID" id="175704"/>
<dbReference type="KEGG" id="cel:CELE_T10F2.3"/>
<dbReference type="UCSC" id="T10F2.3">
    <property type="organism name" value="c. elegans"/>
</dbReference>
<dbReference type="AGR" id="WB:WBGene00006736"/>
<dbReference type="CTD" id="175704"/>
<dbReference type="WormBase" id="T10F2.3">
    <property type="protein sequence ID" value="CE33694"/>
    <property type="gene ID" value="WBGene00006736"/>
    <property type="gene designation" value="ulp-1"/>
</dbReference>
<dbReference type="eggNOG" id="KOG0778">
    <property type="taxonomic scope" value="Eukaryota"/>
</dbReference>
<dbReference type="GeneTree" id="ENSGT00940000167730"/>
<dbReference type="HOGENOM" id="CLU_415183_0_0_1"/>
<dbReference type="InParanoid" id="Q09353"/>
<dbReference type="OMA" id="PRFTQKN"/>
<dbReference type="OrthoDB" id="1939479at2759"/>
<dbReference type="Reactome" id="R-CEL-3065679">
    <property type="pathway name" value="SUMO is proteolytically processed"/>
</dbReference>
<dbReference type="Reactome" id="R-CEL-6791226">
    <property type="pathway name" value="Major pathway of rRNA processing in the nucleolus and cytosol"/>
</dbReference>
<dbReference type="Reactome" id="R-CEL-9035034">
    <property type="pathway name" value="RHOF GTPase cycle"/>
</dbReference>
<dbReference type="PRO" id="PR:Q09353"/>
<dbReference type="Proteomes" id="UP000001940">
    <property type="component" value="Chromosome III"/>
</dbReference>
<dbReference type="Bgee" id="WBGene00006736">
    <property type="expression patterns" value="Expressed in germ line (C elegans) and 4 other cell types or tissues"/>
</dbReference>
<dbReference type="GO" id="GO:0005635">
    <property type="term" value="C:nuclear envelope"/>
    <property type="evidence" value="ECO:0007669"/>
    <property type="project" value="UniProtKB-SubCell"/>
</dbReference>
<dbReference type="GO" id="GO:0005634">
    <property type="term" value="C:nucleus"/>
    <property type="evidence" value="ECO:0000318"/>
    <property type="project" value="GO_Central"/>
</dbReference>
<dbReference type="GO" id="GO:0016929">
    <property type="term" value="F:deSUMOylase activity"/>
    <property type="evidence" value="ECO:0000318"/>
    <property type="project" value="GO_Central"/>
</dbReference>
<dbReference type="GO" id="GO:0009792">
    <property type="term" value="P:embryo development ending in birth or egg hatching"/>
    <property type="evidence" value="ECO:0000315"/>
    <property type="project" value="WormBase"/>
</dbReference>
<dbReference type="GO" id="GO:1904333">
    <property type="term" value="P:positive regulation of error-prone translesion synthesis"/>
    <property type="evidence" value="ECO:0000315"/>
    <property type="project" value="WormBase"/>
</dbReference>
<dbReference type="GO" id="GO:0016926">
    <property type="term" value="P:protein desumoylation"/>
    <property type="evidence" value="ECO:0000315"/>
    <property type="project" value="WormBase"/>
</dbReference>
<dbReference type="GO" id="GO:0006508">
    <property type="term" value="P:proteolysis"/>
    <property type="evidence" value="ECO:0007669"/>
    <property type="project" value="UniProtKB-KW"/>
</dbReference>
<dbReference type="GO" id="GO:0032880">
    <property type="term" value="P:regulation of protein localization"/>
    <property type="evidence" value="ECO:0000315"/>
    <property type="project" value="WormBase"/>
</dbReference>
<dbReference type="FunFam" id="3.40.395.10:FF:000001">
    <property type="entry name" value="Sentrin-specific protease 1"/>
    <property type="match status" value="1"/>
</dbReference>
<dbReference type="Gene3D" id="3.40.395.10">
    <property type="entry name" value="Adenoviral Proteinase, Chain A"/>
    <property type="match status" value="1"/>
</dbReference>
<dbReference type="InterPro" id="IPR038765">
    <property type="entry name" value="Papain-like_cys_pep_sf"/>
</dbReference>
<dbReference type="InterPro" id="IPR003653">
    <property type="entry name" value="Peptidase_C48_C"/>
</dbReference>
<dbReference type="PANTHER" id="PTHR12606:SF141">
    <property type="entry name" value="GH15225P-RELATED"/>
    <property type="match status" value="1"/>
</dbReference>
<dbReference type="PANTHER" id="PTHR12606">
    <property type="entry name" value="SENTRIN/SUMO-SPECIFIC PROTEASE"/>
    <property type="match status" value="1"/>
</dbReference>
<dbReference type="Pfam" id="PF02902">
    <property type="entry name" value="Peptidase_C48"/>
    <property type="match status" value="1"/>
</dbReference>
<dbReference type="SUPFAM" id="SSF54001">
    <property type="entry name" value="Cysteine proteinases"/>
    <property type="match status" value="1"/>
</dbReference>
<dbReference type="PROSITE" id="PS50600">
    <property type="entry name" value="ULP_PROTEASE"/>
    <property type="match status" value="1"/>
</dbReference>